<comment type="function">
    <text evidence="1">Activator of cell division through the inhibition of FtsZ GTPase activity, therefore promoting FtsZ assembly into bundles of protofilaments necessary for the formation of the division Z ring. It is recruited early at mid-cell but it is not essential for cell division.</text>
</comment>
<comment type="subunit">
    <text evidence="1">Homodimer. Interacts with FtsZ.</text>
</comment>
<comment type="subcellular location">
    <subcellularLocation>
        <location evidence="1">Cytoplasm</location>
    </subcellularLocation>
    <text evidence="1">Localizes at mid-cell.</text>
</comment>
<comment type="similarity">
    <text evidence="1">Belongs to the ZapA family. Type 1 subfamily.</text>
</comment>
<protein>
    <recommendedName>
        <fullName evidence="1">Cell division protein ZapA</fullName>
    </recommendedName>
    <alternativeName>
        <fullName evidence="1">Z ring-associated protein ZapA</fullName>
    </alternativeName>
</protein>
<dbReference type="EMBL" id="CP000038">
    <property type="protein sequence ID" value="AAZ89652.1"/>
    <property type="molecule type" value="Genomic_DNA"/>
</dbReference>
<dbReference type="RefSeq" id="WP_001276008.1">
    <property type="nucleotide sequence ID" value="NC_007384.1"/>
</dbReference>
<dbReference type="SMR" id="Q3YXW0"/>
<dbReference type="GeneID" id="93779091"/>
<dbReference type="KEGG" id="ssn:SSON_3063"/>
<dbReference type="HOGENOM" id="CLU_116623_3_0_6"/>
<dbReference type="Proteomes" id="UP000002529">
    <property type="component" value="Chromosome"/>
</dbReference>
<dbReference type="GO" id="GO:0032153">
    <property type="term" value="C:cell division site"/>
    <property type="evidence" value="ECO:0007669"/>
    <property type="project" value="TreeGrafter"/>
</dbReference>
<dbReference type="GO" id="GO:0030428">
    <property type="term" value="C:cell septum"/>
    <property type="evidence" value="ECO:0007669"/>
    <property type="project" value="TreeGrafter"/>
</dbReference>
<dbReference type="GO" id="GO:0005829">
    <property type="term" value="C:cytosol"/>
    <property type="evidence" value="ECO:0007669"/>
    <property type="project" value="TreeGrafter"/>
</dbReference>
<dbReference type="GO" id="GO:0005886">
    <property type="term" value="C:plasma membrane"/>
    <property type="evidence" value="ECO:0007669"/>
    <property type="project" value="UniProtKB-UniRule"/>
</dbReference>
<dbReference type="GO" id="GO:0000917">
    <property type="term" value="P:division septum assembly"/>
    <property type="evidence" value="ECO:0007669"/>
    <property type="project" value="UniProtKB-KW"/>
</dbReference>
<dbReference type="GO" id="GO:0043093">
    <property type="term" value="P:FtsZ-dependent cytokinesis"/>
    <property type="evidence" value="ECO:0007669"/>
    <property type="project" value="TreeGrafter"/>
</dbReference>
<dbReference type="GO" id="GO:0000921">
    <property type="term" value="P:septin ring assembly"/>
    <property type="evidence" value="ECO:0007669"/>
    <property type="project" value="TreeGrafter"/>
</dbReference>
<dbReference type="FunFam" id="1.20.5.50:FF:000001">
    <property type="entry name" value="Cell division protein ZapA"/>
    <property type="match status" value="1"/>
</dbReference>
<dbReference type="FunFam" id="3.30.160.880:FF:000001">
    <property type="entry name" value="Cell division protein ZapA"/>
    <property type="match status" value="1"/>
</dbReference>
<dbReference type="Gene3D" id="1.20.5.50">
    <property type="match status" value="1"/>
</dbReference>
<dbReference type="Gene3D" id="3.30.160.880">
    <property type="entry name" value="Cell division protein ZapA protomer, N-terminal domain"/>
    <property type="match status" value="1"/>
</dbReference>
<dbReference type="HAMAP" id="MF_02012">
    <property type="entry name" value="ZapA_type1"/>
    <property type="match status" value="1"/>
</dbReference>
<dbReference type="InterPro" id="IPR007838">
    <property type="entry name" value="Cell_div_ZapA-like"/>
</dbReference>
<dbReference type="InterPro" id="IPR036192">
    <property type="entry name" value="Cell_div_ZapA-like_sf"/>
</dbReference>
<dbReference type="InterPro" id="IPR023771">
    <property type="entry name" value="Cell_div_ZapA_eubact"/>
</dbReference>
<dbReference type="InterPro" id="IPR042233">
    <property type="entry name" value="Cell_div_ZapA_N"/>
</dbReference>
<dbReference type="NCBIfam" id="NF008209">
    <property type="entry name" value="PRK10972.1"/>
    <property type="match status" value="1"/>
</dbReference>
<dbReference type="PANTHER" id="PTHR34981">
    <property type="entry name" value="CELL DIVISION PROTEIN ZAPA"/>
    <property type="match status" value="1"/>
</dbReference>
<dbReference type="PANTHER" id="PTHR34981:SF1">
    <property type="entry name" value="CELL DIVISION PROTEIN ZAPA"/>
    <property type="match status" value="1"/>
</dbReference>
<dbReference type="Pfam" id="PF05164">
    <property type="entry name" value="ZapA"/>
    <property type="match status" value="1"/>
</dbReference>
<dbReference type="SUPFAM" id="SSF102829">
    <property type="entry name" value="Cell division protein ZapA-like"/>
    <property type="match status" value="1"/>
</dbReference>
<evidence type="ECO:0000255" key="1">
    <source>
        <dbReference type="HAMAP-Rule" id="MF_02012"/>
    </source>
</evidence>
<proteinExistence type="inferred from homology"/>
<reference key="1">
    <citation type="journal article" date="2005" name="Nucleic Acids Res.">
        <title>Genome dynamics and diversity of Shigella species, the etiologic agents of bacillary dysentery.</title>
        <authorList>
            <person name="Yang F."/>
            <person name="Yang J."/>
            <person name="Zhang X."/>
            <person name="Chen L."/>
            <person name="Jiang Y."/>
            <person name="Yan Y."/>
            <person name="Tang X."/>
            <person name="Wang J."/>
            <person name="Xiong Z."/>
            <person name="Dong J."/>
            <person name="Xue Y."/>
            <person name="Zhu Y."/>
            <person name="Xu X."/>
            <person name="Sun L."/>
            <person name="Chen S."/>
            <person name="Nie H."/>
            <person name="Peng J."/>
            <person name="Xu J."/>
            <person name="Wang Y."/>
            <person name="Yuan Z."/>
            <person name="Wen Y."/>
            <person name="Yao Z."/>
            <person name="Shen Y."/>
            <person name="Qiang B."/>
            <person name="Hou Y."/>
            <person name="Yu J."/>
            <person name="Jin Q."/>
        </authorList>
    </citation>
    <scope>NUCLEOTIDE SEQUENCE [LARGE SCALE GENOMIC DNA]</scope>
    <source>
        <strain>Ss046</strain>
    </source>
</reference>
<organism>
    <name type="scientific">Shigella sonnei (strain Ss046)</name>
    <dbReference type="NCBI Taxonomy" id="300269"/>
    <lineage>
        <taxon>Bacteria</taxon>
        <taxon>Pseudomonadati</taxon>
        <taxon>Pseudomonadota</taxon>
        <taxon>Gammaproteobacteria</taxon>
        <taxon>Enterobacterales</taxon>
        <taxon>Enterobacteriaceae</taxon>
        <taxon>Shigella</taxon>
    </lineage>
</organism>
<name>ZAPA_SHISS</name>
<sequence length="109" mass="12594">MSAQPVDIQIFGRSLRVNCPPDQRDALNQAADDLNQRLQDLKERTRVTNTEQLVFIAALNISYELAQEKAKTRDYAASMEQRIRMLQQTIEQALLEQGRITEKTNQNFE</sequence>
<keyword id="KW-0131">Cell cycle</keyword>
<keyword id="KW-0132">Cell division</keyword>
<keyword id="KW-0175">Coiled coil</keyword>
<keyword id="KW-0963">Cytoplasm</keyword>
<keyword id="KW-1185">Reference proteome</keyword>
<keyword id="KW-0717">Septation</keyword>
<feature type="chain" id="PRO_0000345663" description="Cell division protein ZapA">
    <location>
        <begin position="1"/>
        <end position="109"/>
    </location>
</feature>
<feature type="coiled-coil region" evidence="1">
    <location>
        <begin position="21"/>
        <end position="99"/>
    </location>
</feature>
<gene>
    <name evidence="1" type="primary">zapA</name>
    <name type="ordered locus">SSON_3063</name>
</gene>
<accession>Q3YXW0</accession>